<gene>
    <name type="primary">Bgn</name>
</gene>
<keyword id="KW-1015">Disulfide bond</keyword>
<keyword id="KW-0272">Extracellular matrix</keyword>
<keyword id="KW-0325">Glycoprotein</keyword>
<keyword id="KW-0433">Leucine-rich repeat</keyword>
<keyword id="KW-0654">Proteoglycan</keyword>
<keyword id="KW-1185">Reference proteome</keyword>
<keyword id="KW-0677">Repeat</keyword>
<keyword id="KW-0964">Secreted</keyword>
<keyword id="KW-0732">Signal</keyword>
<accession>P28653</accession>
<accession>Q61355</accession>
<sequence length="369" mass="41639">MCPLWLLTLLLALSQALPFEQKGFWDFTLDDGLLMMNDEEASGSDTTSGVPDLDSVTPTFSAMCPFGCHCHLRVVQCSDLGLKTVPKEISPDTTLLDLQNNDISELRKDDFKGLQHLYALVLVNNKISKIHEKAFSPLRKLQKLYISKNHLVEIPPNLPSSLVELRIHDNRIRKVPKGVFSGLRNMNCIEMGGNPLENSGFEPGAFDGLKLNYLRISEAKLTGIPKDLPETLNELHLDHNKIQAIELEDLLRYSKLYRLGLGHNQIRMIENGSLSFLPTLRELHLDNNKLSRVPAGLPDLKLLQVVYLHSNNITKVGINDFCPMGFGVKRAYYNGISLFNNPVPYWEVQPATFRCVTDRLAIQFGNYKK</sequence>
<protein>
    <recommendedName>
        <fullName>Biglycan</fullName>
    </recommendedName>
    <alternativeName>
        <fullName>Bone/cartilage proteoglycan I</fullName>
    </alternativeName>
    <alternativeName>
        <fullName>PG-S1</fullName>
    </alternativeName>
</protein>
<comment type="function">
    <text evidence="1">May be involved in collagen fiber assembly.</text>
</comment>
<comment type="subcellular location">
    <subcellularLocation>
        <location evidence="1">Secreted</location>
        <location evidence="1">Extracellular space</location>
        <location evidence="1">Extracellular matrix</location>
    </subcellularLocation>
</comment>
<comment type="tissue specificity">
    <text>Found in several connective tissues, especially in articular cartilages.</text>
</comment>
<comment type="PTM">
    <text evidence="1">The two attached glycosaminoglycan chains can be either chondroitin sulfate or dermatan sulfate.</text>
</comment>
<comment type="similarity">
    <text evidence="5">Belongs to the small leucine-rich proteoglycan (SLRP) family. SLRP class I subfamily.</text>
</comment>
<evidence type="ECO:0000250" key="1"/>
<evidence type="ECO:0000250" key="2">
    <source>
        <dbReference type="UniProtKB" id="P21810"/>
    </source>
</evidence>
<evidence type="ECO:0000250" key="3">
    <source>
        <dbReference type="UniProtKB" id="P47853"/>
    </source>
</evidence>
<evidence type="ECO:0000255" key="4"/>
<evidence type="ECO:0000305" key="5"/>
<organism>
    <name type="scientific">Mus musculus</name>
    <name type="common">Mouse</name>
    <dbReference type="NCBI Taxonomy" id="10090"/>
    <lineage>
        <taxon>Eukaryota</taxon>
        <taxon>Metazoa</taxon>
        <taxon>Chordata</taxon>
        <taxon>Craniata</taxon>
        <taxon>Vertebrata</taxon>
        <taxon>Euteleostomi</taxon>
        <taxon>Mammalia</taxon>
        <taxon>Eutheria</taxon>
        <taxon>Euarchontoglires</taxon>
        <taxon>Glires</taxon>
        <taxon>Rodentia</taxon>
        <taxon>Myomorpha</taxon>
        <taxon>Muroidea</taxon>
        <taxon>Muridae</taxon>
        <taxon>Murinae</taxon>
        <taxon>Mus</taxon>
        <taxon>Mus</taxon>
    </lineage>
</organism>
<reference key="1">
    <citation type="submission" date="1990-07" db="EMBL/GenBank/DDBJ databases">
        <authorList>
            <person name="Naitoh Y."/>
            <person name="Suzuki S."/>
        </authorList>
    </citation>
    <scope>NUCLEOTIDE SEQUENCE [MRNA]</scope>
    <source>
        <strain>NIH Swiss</strain>
        <tissue>Fibroblast</tissue>
    </source>
</reference>
<reference key="2">
    <citation type="journal article" date="1994" name="Mamm. Genome">
        <title>A dinucleotide repeat in the mouse biglycan gene (EST) on the X chromosome.</title>
        <authorList>
            <person name="Rau W."/>
            <person name="Just W."/>
            <person name="Vetter U."/>
            <person name="Vogel W."/>
        </authorList>
    </citation>
    <scope>NUCLEOTIDE SEQUENCE [MRNA]</scope>
    <source>
        <strain>NIH Swiss</strain>
        <tissue>Embryo</tissue>
    </source>
</reference>
<reference key="3">
    <citation type="journal article" date="2004" name="Genome Res.">
        <title>The status, quality, and expansion of the NIH full-length cDNA project: the Mammalian Gene Collection (MGC).</title>
        <authorList>
            <consortium name="The MGC Project Team"/>
        </authorList>
    </citation>
    <scope>NUCLEOTIDE SEQUENCE [LARGE SCALE MRNA]</scope>
    <source>
        <tissue>Kidney</tissue>
        <tissue>Mammary gland</tissue>
    </source>
</reference>
<reference key="4">
    <citation type="journal article" date="2001" name="Biochem. J.">
        <title>Murine fibromodulin: cDNA and genomic structure, and age-related expression and distribution in the knee joint.</title>
        <authorList>
            <person name="Saeaemaenen A.-M.K."/>
            <person name="Salminen H.J."/>
            <person name="Rantakokko A.J."/>
            <person name="Heinegaard D."/>
            <person name="Vuorio E.I."/>
        </authorList>
    </citation>
    <scope>NUCLEOTIDE SEQUENCE [MRNA] OF 11-152</scope>
    <source>
        <strain>C57BL/6J</strain>
    </source>
</reference>
<reference key="5">
    <citation type="journal article" date="2010" name="Cell">
        <title>A tissue-specific atlas of mouse protein phosphorylation and expression.</title>
        <authorList>
            <person name="Huttlin E.L."/>
            <person name="Jedrychowski M.P."/>
            <person name="Elias J.E."/>
            <person name="Goswami T."/>
            <person name="Rad R."/>
            <person name="Beausoleil S.A."/>
            <person name="Villen J."/>
            <person name="Haas W."/>
            <person name="Sowa M.E."/>
            <person name="Gygi S.P."/>
        </authorList>
    </citation>
    <scope>IDENTIFICATION BY MASS SPECTROMETRY [LARGE SCALE ANALYSIS]</scope>
    <source>
        <tissue>Brown adipose tissue</tissue>
        <tissue>Heart</tissue>
        <tissue>Kidney</tissue>
        <tissue>Liver</tissue>
        <tissue>Lung</tissue>
        <tissue>Pancreas</tissue>
        <tissue>Spleen</tissue>
    </source>
</reference>
<feature type="signal peptide" evidence="3">
    <location>
        <begin position="1"/>
        <end position="16"/>
    </location>
</feature>
<feature type="propeptide" id="PRO_0000032693" evidence="2">
    <location>
        <begin position="17"/>
        <end position="37"/>
    </location>
</feature>
<feature type="chain" id="PRO_0000032694" description="Biglycan">
    <location>
        <begin position="38"/>
        <end position="369"/>
    </location>
</feature>
<feature type="repeat" description="LRR 1">
    <location>
        <begin position="83"/>
        <end position="103"/>
    </location>
</feature>
<feature type="repeat" description="LRR 2">
    <location>
        <begin position="104"/>
        <end position="127"/>
    </location>
</feature>
<feature type="repeat" description="LRR 3">
    <location>
        <begin position="128"/>
        <end position="151"/>
    </location>
</feature>
<feature type="repeat" description="LRR 4">
    <location>
        <begin position="152"/>
        <end position="172"/>
    </location>
</feature>
<feature type="repeat" description="LRR 5">
    <location>
        <begin position="173"/>
        <end position="196"/>
    </location>
</feature>
<feature type="repeat" description="LRR 6">
    <location>
        <begin position="197"/>
        <end position="221"/>
    </location>
</feature>
<feature type="repeat" description="LRR 7">
    <location>
        <begin position="222"/>
        <end position="242"/>
    </location>
</feature>
<feature type="repeat" description="LRR 8">
    <location>
        <begin position="243"/>
        <end position="266"/>
    </location>
</feature>
<feature type="repeat" description="LRR 9">
    <location>
        <begin position="267"/>
        <end position="290"/>
    </location>
</feature>
<feature type="repeat" description="LRR 10">
    <location>
        <begin position="291"/>
        <end position="313"/>
    </location>
</feature>
<feature type="repeat" description="LRR 11">
    <location>
        <begin position="314"/>
        <end position="343"/>
    </location>
</feature>
<feature type="repeat" description="LRR 12">
    <location>
        <begin position="344"/>
        <end position="369"/>
    </location>
</feature>
<feature type="glycosylation site" description="O-linked (Xyl...) (glycosaminoglycan) serine" evidence="2">
    <location>
        <position position="42"/>
    </location>
</feature>
<feature type="glycosylation site" description="O-linked (Xyl...) (glycosaminoglycan) serine" evidence="2">
    <location>
        <position position="48"/>
    </location>
</feature>
<feature type="glycosylation site" description="N-linked (GlcNAc...) asparagine" evidence="4">
    <location>
        <position position="271"/>
    </location>
</feature>
<feature type="glycosylation site" description="N-linked (GlcNAc...) asparagine" evidence="4">
    <location>
        <position position="312"/>
    </location>
</feature>
<feature type="disulfide bond" evidence="1">
    <location>
        <begin position="64"/>
        <end position="70"/>
    </location>
</feature>
<feature type="disulfide bond" evidence="1">
    <location>
        <begin position="68"/>
        <end position="77"/>
    </location>
</feature>
<feature type="disulfide bond" evidence="1">
    <location>
        <begin position="322"/>
        <end position="355"/>
    </location>
</feature>
<feature type="sequence conflict" description="In Ref. 2; AAA64360." evidence="5" ref="2">
    <original>C</original>
    <variation>W</variation>
    <location>
        <position position="68"/>
    </location>
</feature>
<name>PGS1_MOUSE</name>
<dbReference type="EMBL" id="X53928">
    <property type="protein sequence ID" value="CAA37875.1"/>
    <property type="molecule type" value="mRNA"/>
</dbReference>
<dbReference type="EMBL" id="L20276">
    <property type="protein sequence ID" value="AAA64360.1"/>
    <property type="molecule type" value="mRNA"/>
</dbReference>
<dbReference type="EMBL" id="BC005452">
    <property type="protein sequence ID" value="AAH05452.1"/>
    <property type="molecule type" value="mRNA"/>
</dbReference>
<dbReference type="EMBL" id="BC019502">
    <property type="protein sequence ID" value="AAH19502.1"/>
    <property type="molecule type" value="mRNA"/>
</dbReference>
<dbReference type="EMBL" id="Y11758">
    <property type="protein sequence ID" value="CAA72422.1"/>
    <property type="molecule type" value="mRNA"/>
</dbReference>
<dbReference type="CCDS" id="CCDS30204.1"/>
<dbReference type="PIR" id="S20811">
    <property type="entry name" value="S20811"/>
</dbReference>
<dbReference type="RefSeq" id="NP_031568.2">
    <property type="nucleotide sequence ID" value="NM_007542.5"/>
</dbReference>
<dbReference type="SMR" id="P28653"/>
<dbReference type="BioGRID" id="198345">
    <property type="interactions" value="2"/>
</dbReference>
<dbReference type="FunCoup" id="P28653">
    <property type="interactions" value="67"/>
</dbReference>
<dbReference type="IntAct" id="P28653">
    <property type="interactions" value="5"/>
</dbReference>
<dbReference type="MINT" id="P28653"/>
<dbReference type="STRING" id="10090.ENSMUSP00000033741"/>
<dbReference type="GlyCosmos" id="P28653">
    <property type="glycosylation" value="4 sites, No reported glycans"/>
</dbReference>
<dbReference type="GlyGen" id="P28653">
    <property type="glycosylation" value="5 sites, 2 N-linked glycans (2 sites), 1 O-linked glycan (1 site)"/>
</dbReference>
<dbReference type="PhosphoSitePlus" id="P28653"/>
<dbReference type="SwissPalm" id="P28653"/>
<dbReference type="jPOST" id="P28653"/>
<dbReference type="PaxDb" id="10090-ENSMUSP00000033741"/>
<dbReference type="PeptideAtlas" id="P28653"/>
<dbReference type="ProteomicsDB" id="288132"/>
<dbReference type="Pumba" id="P28653"/>
<dbReference type="Antibodypedia" id="558">
    <property type="antibodies" value="409 antibodies from 37 providers"/>
</dbReference>
<dbReference type="DNASU" id="12111"/>
<dbReference type="Ensembl" id="ENSMUST00000033741.15">
    <property type="protein sequence ID" value="ENSMUSP00000033741.8"/>
    <property type="gene ID" value="ENSMUSG00000031375.19"/>
</dbReference>
<dbReference type="GeneID" id="12111"/>
<dbReference type="KEGG" id="mmu:12111"/>
<dbReference type="UCSC" id="uc012hkf.1">
    <property type="organism name" value="mouse"/>
</dbReference>
<dbReference type="AGR" id="MGI:88158"/>
<dbReference type="CTD" id="633"/>
<dbReference type="MGI" id="MGI:88158">
    <property type="gene designation" value="Bgn"/>
</dbReference>
<dbReference type="VEuPathDB" id="HostDB:ENSMUSG00000031375"/>
<dbReference type="eggNOG" id="KOG0619">
    <property type="taxonomic scope" value="Eukaryota"/>
</dbReference>
<dbReference type="GeneTree" id="ENSGT00940000155311"/>
<dbReference type="HOGENOM" id="CLU_000288_186_0_1"/>
<dbReference type="InParanoid" id="P28653"/>
<dbReference type="OMA" id="VEMRIHE"/>
<dbReference type="PhylomeDB" id="P28653"/>
<dbReference type="TreeFam" id="TF334562"/>
<dbReference type="Reactome" id="R-MMU-1971475">
    <property type="pathway name" value="A tetrasaccharide linker sequence is required for GAG synthesis"/>
</dbReference>
<dbReference type="Reactome" id="R-MMU-2022870">
    <property type="pathway name" value="Chondroitin sulfate biosynthesis"/>
</dbReference>
<dbReference type="Reactome" id="R-MMU-2022923">
    <property type="pathway name" value="Dermatan sulfate biosynthesis"/>
</dbReference>
<dbReference type="Reactome" id="R-MMU-2024101">
    <property type="pathway name" value="CS/DS degradation"/>
</dbReference>
<dbReference type="Reactome" id="R-MMU-3000178">
    <property type="pathway name" value="ECM proteoglycans"/>
</dbReference>
<dbReference type="BioGRID-ORCS" id="12111">
    <property type="hits" value="1 hit in 80 CRISPR screens"/>
</dbReference>
<dbReference type="CD-CODE" id="01CA17F3">
    <property type="entry name" value="Centrosome"/>
</dbReference>
<dbReference type="ChiTaRS" id="Bgn">
    <property type="organism name" value="mouse"/>
</dbReference>
<dbReference type="PRO" id="PR:P28653"/>
<dbReference type="Proteomes" id="UP000000589">
    <property type="component" value="Chromosome X"/>
</dbReference>
<dbReference type="RNAct" id="P28653">
    <property type="molecule type" value="protein"/>
</dbReference>
<dbReference type="Bgee" id="ENSMUSG00000031375">
    <property type="expression patterns" value="Expressed in vault of skull and 238 other cell types or tissues"/>
</dbReference>
<dbReference type="ExpressionAtlas" id="P28653">
    <property type="expression patterns" value="baseline and differential"/>
</dbReference>
<dbReference type="GO" id="GO:0009986">
    <property type="term" value="C:cell surface"/>
    <property type="evidence" value="ECO:0000250"/>
    <property type="project" value="MGI"/>
</dbReference>
<dbReference type="GO" id="GO:0062023">
    <property type="term" value="C:collagen-containing extracellular matrix"/>
    <property type="evidence" value="ECO:0007005"/>
    <property type="project" value="BHF-UCL"/>
</dbReference>
<dbReference type="GO" id="GO:0031012">
    <property type="term" value="C:extracellular matrix"/>
    <property type="evidence" value="ECO:0000314"/>
    <property type="project" value="MGI"/>
</dbReference>
<dbReference type="GO" id="GO:0005576">
    <property type="term" value="C:extracellular region"/>
    <property type="evidence" value="ECO:0007669"/>
    <property type="project" value="UniProtKB-KW"/>
</dbReference>
<dbReference type="GO" id="GO:0042383">
    <property type="term" value="C:sarcolemma"/>
    <property type="evidence" value="ECO:0000314"/>
    <property type="project" value="MGI"/>
</dbReference>
<dbReference type="GO" id="GO:0030133">
    <property type="term" value="C:transport vesicle"/>
    <property type="evidence" value="ECO:0007669"/>
    <property type="project" value="Ensembl"/>
</dbReference>
<dbReference type="GO" id="GO:0019955">
    <property type="term" value="F:cytokine binding"/>
    <property type="evidence" value="ECO:0000353"/>
    <property type="project" value="MGI"/>
</dbReference>
<dbReference type="GO" id="GO:0050840">
    <property type="term" value="F:extracellular matrix binding"/>
    <property type="evidence" value="ECO:0000314"/>
    <property type="project" value="MGI"/>
</dbReference>
<dbReference type="GO" id="GO:0005539">
    <property type="term" value="F:glycosaminoglycan binding"/>
    <property type="evidence" value="ECO:0000314"/>
    <property type="project" value="MGI"/>
</dbReference>
<dbReference type="GO" id="GO:0061975">
    <property type="term" value="P:articular cartilage development"/>
    <property type="evidence" value="ECO:0000316"/>
    <property type="project" value="MGI"/>
</dbReference>
<dbReference type="GO" id="GO:0001974">
    <property type="term" value="P:blood vessel remodeling"/>
    <property type="evidence" value="ECO:0007669"/>
    <property type="project" value="Ensembl"/>
</dbReference>
<dbReference type="GO" id="GO:0060348">
    <property type="term" value="P:bone development"/>
    <property type="evidence" value="ECO:0000316"/>
    <property type="project" value="MGI"/>
</dbReference>
<dbReference type="FunFam" id="3.80.10.10:FF:000038">
    <property type="entry name" value="Biglycan"/>
    <property type="match status" value="1"/>
</dbReference>
<dbReference type="Gene3D" id="3.80.10.10">
    <property type="entry name" value="Ribonuclease Inhibitor"/>
    <property type="match status" value="1"/>
</dbReference>
<dbReference type="InterPro" id="IPR001611">
    <property type="entry name" value="Leu-rich_rpt"/>
</dbReference>
<dbReference type="InterPro" id="IPR003591">
    <property type="entry name" value="Leu-rich_rpt_typical-subtyp"/>
</dbReference>
<dbReference type="InterPro" id="IPR032675">
    <property type="entry name" value="LRR_dom_sf"/>
</dbReference>
<dbReference type="InterPro" id="IPR000372">
    <property type="entry name" value="LRRNT"/>
</dbReference>
<dbReference type="InterPro" id="IPR050333">
    <property type="entry name" value="SLRP"/>
</dbReference>
<dbReference type="InterPro" id="IPR016352">
    <property type="entry name" value="SLRP_I_decor/aspor/byglycan"/>
</dbReference>
<dbReference type="PANTHER" id="PTHR45712">
    <property type="entry name" value="AGAP008170-PA"/>
    <property type="match status" value="1"/>
</dbReference>
<dbReference type="PANTHER" id="PTHR45712:SF11">
    <property type="entry name" value="BIGLYCAN"/>
    <property type="match status" value="1"/>
</dbReference>
<dbReference type="Pfam" id="PF13855">
    <property type="entry name" value="LRR_8"/>
    <property type="match status" value="3"/>
</dbReference>
<dbReference type="Pfam" id="PF01462">
    <property type="entry name" value="LRRNT"/>
    <property type="match status" value="1"/>
</dbReference>
<dbReference type="PIRSF" id="PIRSF002490">
    <property type="entry name" value="SLRP_I"/>
    <property type="match status" value="1"/>
</dbReference>
<dbReference type="SMART" id="SM00364">
    <property type="entry name" value="LRR_BAC"/>
    <property type="match status" value="3"/>
</dbReference>
<dbReference type="SMART" id="SM00369">
    <property type="entry name" value="LRR_TYP"/>
    <property type="match status" value="8"/>
</dbReference>
<dbReference type="SMART" id="SM00013">
    <property type="entry name" value="LRRNT"/>
    <property type="match status" value="1"/>
</dbReference>
<dbReference type="SUPFAM" id="SSF52058">
    <property type="entry name" value="L domain-like"/>
    <property type="match status" value="1"/>
</dbReference>
<dbReference type="PROSITE" id="PS51450">
    <property type="entry name" value="LRR"/>
    <property type="match status" value="8"/>
</dbReference>
<proteinExistence type="evidence at protein level"/>